<keyword id="KW-0687">Ribonucleoprotein</keyword>
<keyword id="KW-0689">Ribosomal protein</keyword>
<keyword id="KW-0694">RNA-binding</keyword>
<keyword id="KW-0699">rRNA-binding</keyword>
<gene>
    <name evidence="1" type="primary">rpsK</name>
    <name type="ordered locus">RPA3227</name>
</gene>
<sequence>MAKDATRIRRRERKNIASGIAHVNSSFNNTTITITDAQGNAIAWSSAGTMGFKGSRKSTPYAAQVAAEDVAKKAQEHGMRTLEVEVAGPGSGRESALRALQAAGFTVTSIRDVTTIPHNGCRPRKRRRV</sequence>
<proteinExistence type="evidence at protein level"/>
<reference key="1">
    <citation type="journal article" date="2004" name="Nat. Biotechnol.">
        <title>Complete genome sequence of the metabolically versatile photosynthetic bacterium Rhodopseudomonas palustris.</title>
        <authorList>
            <person name="Larimer F.W."/>
            <person name="Chain P."/>
            <person name="Hauser L."/>
            <person name="Lamerdin J.E."/>
            <person name="Malfatti S."/>
            <person name="Do L."/>
            <person name="Land M.L."/>
            <person name="Pelletier D.A."/>
            <person name="Beatty J.T."/>
            <person name="Lang A.S."/>
            <person name="Tabita F.R."/>
            <person name="Gibson J.L."/>
            <person name="Hanson T.E."/>
            <person name="Bobst C."/>
            <person name="Torres y Torres J.L."/>
            <person name="Peres C."/>
            <person name="Harrison F.H."/>
            <person name="Gibson J."/>
            <person name="Harwood C.S."/>
        </authorList>
    </citation>
    <scope>NUCLEOTIDE SEQUENCE [LARGE SCALE GENOMIC DNA]</scope>
    <source>
        <strain>ATCC BAA-98 / CGA009</strain>
    </source>
</reference>
<reference key="2">
    <citation type="journal article" date="2004" name="J. Proteome Res.">
        <title>Characterization of the 70S ribosome from Rhodopseudomonas palustris using an integrated 'top-down' and 'bottom-up' mass spectrometric approach.</title>
        <authorList>
            <person name="Strader M.B."/>
            <person name="VerBerkmoes N.C."/>
            <person name="Tabb D.L."/>
            <person name="Connelly H.M."/>
            <person name="Barton J.W."/>
            <person name="Bruce B.D."/>
            <person name="Pelletier D.A."/>
            <person name="Davison B.H."/>
            <person name="Hettich R.L."/>
            <person name="Larimer F.W."/>
            <person name="Hurst G.B."/>
        </authorList>
    </citation>
    <scope>MASS SPECTROMETRY</scope>
    <source>
        <strain>ATCC BAA-98 / CGA009</strain>
    </source>
</reference>
<feature type="initiator methionine" description="Removed">
    <location>
        <position position="1"/>
    </location>
</feature>
<feature type="chain" id="PRO_0000123208" description="Small ribosomal subunit protein uS11">
    <location>
        <begin position="2"/>
        <end position="129"/>
    </location>
</feature>
<accession>Q6N4V6</accession>
<comment type="function">
    <text evidence="1">Located on the platform of the 30S subunit, it bridges several disparate RNA helices of the 16S rRNA. Forms part of the Shine-Dalgarno cleft in the 70S ribosome.</text>
</comment>
<comment type="subunit">
    <text evidence="1">Part of the 30S ribosomal subunit. Interacts with proteins S7 and S18. Binds to IF-3.</text>
</comment>
<comment type="PTM">
    <text>May be methylated on an undetermined residue.</text>
</comment>
<comment type="mass spectrometry"/>
<comment type="similarity">
    <text evidence="1">Belongs to the universal ribosomal protein uS11 family.</text>
</comment>
<protein>
    <recommendedName>
        <fullName evidence="1">Small ribosomal subunit protein uS11</fullName>
    </recommendedName>
    <alternativeName>
        <fullName evidence="3">30S ribosomal protein S11</fullName>
    </alternativeName>
    <alternativeName>
        <fullName>RRP-S11</fullName>
    </alternativeName>
</protein>
<dbReference type="EMBL" id="BX572603">
    <property type="protein sequence ID" value="CAE28668.1"/>
    <property type="molecule type" value="Genomic_DNA"/>
</dbReference>
<dbReference type="RefSeq" id="WP_011158772.1">
    <property type="nucleotide sequence ID" value="NZ_CP116810.1"/>
</dbReference>
<dbReference type="SMR" id="Q6N4V6"/>
<dbReference type="IntAct" id="Q6N4V6">
    <property type="interactions" value="1"/>
</dbReference>
<dbReference type="STRING" id="258594.RPA3227"/>
<dbReference type="GeneID" id="66894313"/>
<dbReference type="eggNOG" id="COG0100">
    <property type="taxonomic scope" value="Bacteria"/>
</dbReference>
<dbReference type="HOGENOM" id="CLU_072439_5_0_5"/>
<dbReference type="PhylomeDB" id="Q6N4V6"/>
<dbReference type="GO" id="GO:1990904">
    <property type="term" value="C:ribonucleoprotein complex"/>
    <property type="evidence" value="ECO:0007669"/>
    <property type="project" value="UniProtKB-KW"/>
</dbReference>
<dbReference type="GO" id="GO:0005840">
    <property type="term" value="C:ribosome"/>
    <property type="evidence" value="ECO:0007669"/>
    <property type="project" value="UniProtKB-KW"/>
</dbReference>
<dbReference type="GO" id="GO:0019843">
    <property type="term" value="F:rRNA binding"/>
    <property type="evidence" value="ECO:0007669"/>
    <property type="project" value="UniProtKB-UniRule"/>
</dbReference>
<dbReference type="GO" id="GO:0003735">
    <property type="term" value="F:structural constituent of ribosome"/>
    <property type="evidence" value="ECO:0007669"/>
    <property type="project" value="InterPro"/>
</dbReference>
<dbReference type="GO" id="GO:0006412">
    <property type="term" value="P:translation"/>
    <property type="evidence" value="ECO:0007669"/>
    <property type="project" value="UniProtKB-UniRule"/>
</dbReference>
<dbReference type="FunFam" id="3.30.420.80:FF:000001">
    <property type="entry name" value="30S ribosomal protein S11"/>
    <property type="match status" value="1"/>
</dbReference>
<dbReference type="Gene3D" id="3.30.420.80">
    <property type="entry name" value="Ribosomal protein S11"/>
    <property type="match status" value="1"/>
</dbReference>
<dbReference type="HAMAP" id="MF_01310">
    <property type="entry name" value="Ribosomal_uS11"/>
    <property type="match status" value="1"/>
</dbReference>
<dbReference type="InterPro" id="IPR001971">
    <property type="entry name" value="Ribosomal_uS11"/>
</dbReference>
<dbReference type="InterPro" id="IPR019981">
    <property type="entry name" value="Ribosomal_uS11_bac-type"/>
</dbReference>
<dbReference type="InterPro" id="IPR036967">
    <property type="entry name" value="Ribosomal_uS11_sf"/>
</dbReference>
<dbReference type="NCBIfam" id="NF003698">
    <property type="entry name" value="PRK05309.1"/>
    <property type="match status" value="1"/>
</dbReference>
<dbReference type="NCBIfam" id="TIGR03632">
    <property type="entry name" value="uS11_bact"/>
    <property type="match status" value="1"/>
</dbReference>
<dbReference type="PANTHER" id="PTHR11759">
    <property type="entry name" value="40S RIBOSOMAL PROTEIN S14/30S RIBOSOMAL PROTEIN S11"/>
    <property type="match status" value="1"/>
</dbReference>
<dbReference type="Pfam" id="PF00411">
    <property type="entry name" value="Ribosomal_S11"/>
    <property type="match status" value="1"/>
</dbReference>
<dbReference type="PIRSF" id="PIRSF002131">
    <property type="entry name" value="Ribosomal_S11"/>
    <property type="match status" value="1"/>
</dbReference>
<dbReference type="SUPFAM" id="SSF53137">
    <property type="entry name" value="Translational machinery components"/>
    <property type="match status" value="1"/>
</dbReference>
<evidence type="ECO:0000255" key="1">
    <source>
        <dbReference type="HAMAP-Rule" id="MF_01310"/>
    </source>
</evidence>
<evidence type="ECO:0000269" key="2">
    <source>
    </source>
</evidence>
<evidence type="ECO:0000305" key="3"/>
<organism>
    <name type="scientific">Rhodopseudomonas palustris (strain ATCC BAA-98 / CGA009)</name>
    <dbReference type="NCBI Taxonomy" id="258594"/>
    <lineage>
        <taxon>Bacteria</taxon>
        <taxon>Pseudomonadati</taxon>
        <taxon>Pseudomonadota</taxon>
        <taxon>Alphaproteobacteria</taxon>
        <taxon>Hyphomicrobiales</taxon>
        <taxon>Nitrobacteraceae</taxon>
        <taxon>Rhodopseudomonas</taxon>
    </lineage>
</organism>
<name>RS11_RHOPA</name>